<keyword id="KW-0067">ATP-binding</keyword>
<keyword id="KW-0963">Cytoplasm</keyword>
<keyword id="KW-0378">Hydrolase</keyword>
<keyword id="KW-0547">Nucleotide-binding</keyword>
<keyword id="KW-0645">Protease</keyword>
<keyword id="KW-1185">Reference proteome</keyword>
<keyword id="KW-0720">Serine protease</keyword>
<keyword id="KW-0346">Stress response</keyword>
<dbReference type="EC" id="3.4.21.53" evidence="1"/>
<dbReference type="EMBL" id="CP001280">
    <property type="protein sequence ID" value="ACK52080.1"/>
    <property type="molecule type" value="Genomic_DNA"/>
</dbReference>
<dbReference type="RefSeq" id="WP_012592149.1">
    <property type="nucleotide sequence ID" value="NC_011666.1"/>
</dbReference>
<dbReference type="SMR" id="B8EMF2"/>
<dbReference type="STRING" id="395965.Msil_3172"/>
<dbReference type="KEGG" id="msl:Msil_3172"/>
<dbReference type="eggNOG" id="COG0466">
    <property type="taxonomic scope" value="Bacteria"/>
</dbReference>
<dbReference type="HOGENOM" id="CLU_004109_4_3_5"/>
<dbReference type="OrthoDB" id="9803599at2"/>
<dbReference type="Proteomes" id="UP000002257">
    <property type="component" value="Chromosome"/>
</dbReference>
<dbReference type="GO" id="GO:0005737">
    <property type="term" value="C:cytoplasm"/>
    <property type="evidence" value="ECO:0007669"/>
    <property type="project" value="UniProtKB-SubCell"/>
</dbReference>
<dbReference type="GO" id="GO:0005524">
    <property type="term" value="F:ATP binding"/>
    <property type="evidence" value="ECO:0007669"/>
    <property type="project" value="UniProtKB-UniRule"/>
</dbReference>
<dbReference type="GO" id="GO:0016887">
    <property type="term" value="F:ATP hydrolysis activity"/>
    <property type="evidence" value="ECO:0007669"/>
    <property type="project" value="UniProtKB-UniRule"/>
</dbReference>
<dbReference type="GO" id="GO:0004176">
    <property type="term" value="F:ATP-dependent peptidase activity"/>
    <property type="evidence" value="ECO:0007669"/>
    <property type="project" value="UniProtKB-UniRule"/>
</dbReference>
<dbReference type="GO" id="GO:0043565">
    <property type="term" value="F:sequence-specific DNA binding"/>
    <property type="evidence" value="ECO:0007669"/>
    <property type="project" value="UniProtKB-UniRule"/>
</dbReference>
<dbReference type="GO" id="GO:0004252">
    <property type="term" value="F:serine-type endopeptidase activity"/>
    <property type="evidence" value="ECO:0007669"/>
    <property type="project" value="UniProtKB-UniRule"/>
</dbReference>
<dbReference type="GO" id="GO:0034605">
    <property type="term" value="P:cellular response to heat"/>
    <property type="evidence" value="ECO:0007669"/>
    <property type="project" value="UniProtKB-UniRule"/>
</dbReference>
<dbReference type="GO" id="GO:0006515">
    <property type="term" value="P:protein quality control for misfolded or incompletely synthesized proteins"/>
    <property type="evidence" value="ECO:0007669"/>
    <property type="project" value="UniProtKB-UniRule"/>
</dbReference>
<dbReference type="CDD" id="cd19500">
    <property type="entry name" value="RecA-like_Lon"/>
    <property type="match status" value="1"/>
</dbReference>
<dbReference type="FunFam" id="1.20.5.5270:FF:000002">
    <property type="entry name" value="Lon protease homolog"/>
    <property type="match status" value="1"/>
</dbReference>
<dbReference type="FunFam" id="3.40.50.300:FF:000382">
    <property type="entry name" value="Lon protease homolog 2, peroxisomal"/>
    <property type="match status" value="1"/>
</dbReference>
<dbReference type="Gene3D" id="1.10.8.60">
    <property type="match status" value="1"/>
</dbReference>
<dbReference type="Gene3D" id="1.20.5.5270">
    <property type="match status" value="1"/>
</dbReference>
<dbReference type="Gene3D" id="1.20.58.1480">
    <property type="match status" value="1"/>
</dbReference>
<dbReference type="Gene3D" id="3.30.230.10">
    <property type="match status" value="1"/>
</dbReference>
<dbReference type="Gene3D" id="2.30.130.40">
    <property type="entry name" value="LON domain-like"/>
    <property type="match status" value="1"/>
</dbReference>
<dbReference type="Gene3D" id="3.40.50.300">
    <property type="entry name" value="P-loop containing nucleotide triphosphate hydrolases"/>
    <property type="match status" value="1"/>
</dbReference>
<dbReference type="HAMAP" id="MF_01973">
    <property type="entry name" value="lon_bact"/>
    <property type="match status" value="1"/>
</dbReference>
<dbReference type="InterPro" id="IPR003593">
    <property type="entry name" value="AAA+_ATPase"/>
</dbReference>
<dbReference type="InterPro" id="IPR003959">
    <property type="entry name" value="ATPase_AAA_core"/>
</dbReference>
<dbReference type="InterPro" id="IPR027543">
    <property type="entry name" value="Lon_bac"/>
</dbReference>
<dbReference type="InterPro" id="IPR004815">
    <property type="entry name" value="Lon_bac/euk-typ"/>
</dbReference>
<dbReference type="InterPro" id="IPR054594">
    <property type="entry name" value="Lon_lid"/>
</dbReference>
<dbReference type="InterPro" id="IPR008269">
    <property type="entry name" value="Lon_proteolytic"/>
</dbReference>
<dbReference type="InterPro" id="IPR027065">
    <property type="entry name" value="Lon_Prtase"/>
</dbReference>
<dbReference type="InterPro" id="IPR003111">
    <property type="entry name" value="Lon_prtase_N"/>
</dbReference>
<dbReference type="InterPro" id="IPR046336">
    <property type="entry name" value="Lon_prtase_N_sf"/>
</dbReference>
<dbReference type="InterPro" id="IPR027417">
    <property type="entry name" value="P-loop_NTPase"/>
</dbReference>
<dbReference type="InterPro" id="IPR008268">
    <property type="entry name" value="Peptidase_S16_AS"/>
</dbReference>
<dbReference type="InterPro" id="IPR015947">
    <property type="entry name" value="PUA-like_sf"/>
</dbReference>
<dbReference type="InterPro" id="IPR020568">
    <property type="entry name" value="Ribosomal_Su5_D2-typ_SF"/>
</dbReference>
<dbReference type="InterPro" id="IPR014721">
    <property type="entry name" value="Ribsml_uS5_D2-typ_fold_subgr"/>
</dbReference>
<dbReference type="NCBIfam" id="TIGR00763">
    <property type="entry name" value="lon"/>
    <property type="match status" value="1"/>
</dbReference>
<dbReference type="PANTHER" id="PTHR10046">
    <property type="entry name" value="ATP DEPENDENT LON PROTEASE FAMILY MEMBER"/>
    <property type="match status" value="1"/>
</dbReference>
<dbReference type="Pfam" id="PF00004">
    <property type="entry name" value="AAA"/>
    <property type="match status" value="1"/>
</dbReference>
<dbReference type="Pfam" id="PF05362">
    <property type="entry name" value="Lon_C"/>
    <property type="match status" value="1"/>
</dbReference>
<dbReference type="Pfam" id="PF22667">
    <property type="entry name" value="Lon_lid"/>
    <property type="match status" value="1"/>
</dbReference>
<dbReference type="Pfam" id="PF02190">
    <property type="entry name" value="LON_substr_bdg"/>
    <property type="match status" value="1"/>
</dbReference>
<dbReference type="PIRSF" id="PIRSF001174">
    <property type="entry name" value="Lon_proteas"/>
    <property type="match status" value="1"/>
</dbReference>
<dbReference type="PRINTS" id="PR00830">
    <property type="entry name" value="ENDOLAPTASE"/>
</dbReference>
<dbReference type="SMART" id="SM00382">
    <property type="entry name" value="AAA"/>
    <property type="match status" value="1"/>
</dbReference>
<dbReference type="SMART" id="SM00464">
    <property type="entry name" value="LON"/>
    <property type="match status" value="1"/>
</dbReference>
<dbReference type="SUPFAM" id="SSF52540">
    <property type="entry name" value="P-loop containing nucleoside triphosphate hydrolases"/>
    <property type="match status" value="1"/>
</dbReference>
<dbReference type="SUPFAM" id="SSF88697">
    <property type="entry name" value="PUA domain-like"/>
    <property type="match status" value="1"/>
</dbReference>
<dbReference type="SUPFAM" id="SSF54211">
    <property type="entry name" value="Ribosomal protein S5 domain 2-like"/>
    <property type="match status" value="1"/>
</dbReference>
<dbReference type="PROSITE" id="PS51787">
    <property type="entry name" value="LON_N"/>
    <property type="match status" value="1"/>
</dbReference>
<dbReference type="PROSITE" id="PS51786">
    <property type="entry name" value="LON_PROTEOLYTIC"/>
    <property type="match status" value="1"/>
</dbReference>
<dbReference type="PROSITE" id="PS01046">
    <property type="entry name" value="LON_SER"/>
    <property type="match status" value="1"/>
</dbReference>
<reference key="1">
    <citation type="journal article" date="2010" name="J. Bacteriol.">
        <title>Complete genome sequence of the aerobic facultative methanotroph Methylocella silvestris BL2.</title>
        <authorList>
            <person name="Chen Y."/>
            <person name="Crombie A."/>
            <person name="Rahman M.T."/>
            <person name="Dedysh S.N."/>
            <person name="Liesack W."/>
            <person name="Stott M.B."/>
            <person name="Alam M."/>
            <person name="Theisen A.R."/>
            <person name="Murrell J.C."/>
            <person name="Dunfield P.F."/>
        </authorList>
    </citation>
    <scope>NUCLEOTIDE SEQUENCE [LARGE SCALE GENOMIC DNA]</scope>
    <source>
        <strain>DSM 15510 / CIP 108128 / LMG 27833 / NCIMB 13906 / BL2</strain>
    </source>
</reference>
<name>LON_METSB</name>
<accession>B8EMF2</accession>
<gene>
    <name evidence="1" type="primary">lon</name>
    <name type="ordered locus">Msil_3172</name>
</gene>
<evidence type="ECO:0000255" key="1">
    <source>
        <dbReference type="HAMAP-Rule" id="MF_01973"/>
    </source>
</evidence>
<evidence type="ECO:0000255" key="2">
    <source>
        <dbReference type="PROSITE-ProRule" id="PRU01122"/>
    </source>
</evidence>
<evidence type="ECO:0000255" key="3">
    <source>
        <dbReference type="PROSITE-ProRule" id="PRU01123"/>
    </source>
</evidence>
<proteinExistence type="inferred from homology"/>
<organism>
    <name type="scientific">Methylocella silvestris (strain DSM 15510 / CIP 108128 / LMG 27833 / NCIMB 13906 / BL2)</name>
    <dbReference type="NCBI Taxonomy" id="395965"/>
    <lineage>
        <taxon>Bacteria</taxon>
        <taxon>Pseudomonadati</taxon>
        <taxon>Pseudomonadota</taxon>
        <taxon>Alphaproteobacteria</taxon>
        <taxon>Hyphomicrobiales</taxon>
        <taxon>Beijerinckiaceae</taxon>
        <taxon>Methylocella</taxon>
    </lineage>
</organism>
<protein>
    <recommendedName>
        <fullName evidence="1">Lon protease</fullName>
        <ecNumber evidence="1">3.4.21.53</ecNumber>
    </recommendedName>
    <alternativeName>
        <fullName evidence="1">ATP-dependent protease La</fullName>
    </alternativeName>
</protein>
<feature type="chain" id="PRO_5000424817" description="Lon protease">
    <location>
        <begin position="1"/>
        <end position="810"/>
    </location>
</feature>
<feature type="domain" description="Lon N-terminal" evidence="3">
    <location>
        <begin position="40"/>
        <end position="233"/>
    </location>
</feature>
<feature type="domain" description="Lon proteolytic" evidence="2">
    <location>
        <begin position="621"/>
        <end position="802"/>
    </location>
</feature>
<feature type="active site" evidence="1">
    <location>
        <position position="708"/>
    </location>
</feature>
<feature type="active site" evidence="1">
    <location>
        <position position="751"/>
    </location>
</feature>
<feature type="binding site" evidence="1">
    <location>
        <begin position="385"/>
        <end position="392"/>
    </location>
    <ligand>
        <name>ATP</name>
        <dbReference type="ChEBI" id="CHEBI:30616"/>
    </ligand>
</feature>
<comment type="function">
    <text evidence="1">ATP-dependent serine protease that mediates the selective degradation of mutant and abnormal proteins as well as certain short-lived regulatory proteins. Required for cellular homeostasis and for survival from DNA damage and developmental changes induced by stress. Degrades polypeptides processively to yield small peptide fragments that are 5 to 10 amino acids long. Binds to DNA in a double-stranded, site-specific manner.</text>
</comment>
<comment type="catalytic activity">
    <reaction evidence="1">
        <text>Hydrolysis of proteins in presence of ATP.</text>
        <dbReference type="EC" id="3.4.21.53"/>
    </reaction>
</comment>
<comment type="subunit">
    <text evidence="1">Homohexamer. Organized in a ring with a central cavity.</text>
</comment>
<comment type="subcellular location">
    <subcellularLocation>
        <location evidence="1">Cytoplasm</location>
    </subcellularLocation>
</comment>
<comment type="induction">
    <text evidence="1">By heat shock.</text>
</comment>
<comment type="similarity">
    <text evidence="1">Belongs to the peptidase S16 family.</text>
</comment>
<sequence>MESFAPTRKGRAVFSADAAATAAPGSAGAGETLDPAKDALIIVPVRGFVLFPGIVMPVVLNGPAAIAAAQEAVRQQRSVGILMQRESGAEEASPLNMHRFGVVANILRYITAQDGGHHLICQGEQRFHVEEFLRERPYLAARVKRIEEPDERSPDIEARFVHLQGQASEALQLLPQTPPELIAAVNSAPSPGALTDLVAAYMDASPAQKQDILETIDLRARMDMVAKLLAQRIEVLRLSQEIGRQTKASLDERQREMLLREQMASIQRQLGEGDGKAQEIAELTEAIAKAKMPAEVEEAARKELRRLERMPDASAEYGMIRTYIDWLIELPWSLPEEAPIDIAEARRILDADHFGLDKIKQRIVEYLAVRKLAPQGKAPILCFVGPPGVGKTSLGQSIARAMGRKFVRVSLGGVHDEAEIRGHRRTYVGALPGNIIQAIRKAGARNCVMMLDEIDKMGASAHGDPGSAMLEVLDPEQNSTFRDNYLAVPFDLSRVVFIATANMLDTVPGPLRDRMEIIALTGYTDREKLEIARRYLVRRQLEANGLKPDQVEIDDDALIEIIRGYTREAGVRNLEREIGRVLRHVAVRIADGSASHVHVSRAELTELLGQQRFEDEVAMRLSVPGVATGLAWTPVGGDILFIEATRAPGHGKLTLTGQLGEVMRESVQAALSLIKSRAAELGVDPESFDKTDIHVHVPAGATPKDGPSAGVAMFIALVSILTGRLVRNDTAMTGEISLRGLVLPVGGIKEKVVAAARAGLTRVLLPARNRRDYDEIPQDTREKLEFVWLEKVDDAMAAAFEGMAATPAPN</sequence>